<sequence>MRHRKSGRKLNRNSSHRKAMFRNMSASLFEHEMIKTTVAKAKELRGVAEPLITLAKQDSVHNRRIAFSRLRDKAAVGKLFSELGPRYESRPGGYVRILKCGFRPGDNAPMAYVELVDRPQVESTESED</sequence>
<feature type="chain" id="PRO_0000267961" description="Large ribosomal subunit protein bL17">
    <location>
        <begin position="1"/>
        <end position="128"/>
    </location>
</feature>
<keyword id="KW-0687">Ribonucleoprotein</keyword>
<keyword id="KW-0689">Ribosomal protein</keyword>
<accession>Q31IV7</accession>
<comment type="subunit">
    <text evidence="1">Part of the 50S ribosomal subunit. Contacts protein L32.</text>
</comment>
<comment type="similarity">
    <text evidence="1">Belongs to the bacterial ribosomal protein bL17 family.</text>
</comment>
<proteinExistence type="inferred from homology"/>
<reference key="1">
    <citation type="journal article" date="2006" name="PLoS Biol.">
        <title>The genome of deep-sea vent chemolithoautotroph Thiomicrospira crunogena XCL-2.</title>
        <authorList>
            <person name="Scott K.M."/>
            <person name="Sievert S.M."/>
            <person name="Abril F.N."/>
            <person name="Ball L.A."/>
            <person name="Barrett C.J."/>
            <person name="Blake R.A."/>
            <person name="Boller A.J."/>
            <person name="Chain P.S.G."/>
            <person name="Clark J.A."/>
            <person name="Davis C.R."/>
            <person name="Detter C."/>
            <person name="Do K.F."/>
            <person name="Dobrinski K.P."/>
            <person name="Faza B.I."/>
            <person name="Fitzpatrick K.A."/>
            <person name="Freyermuth S.K."/>
            <person name="Harmer T.L."/>
            <person name="Hauser L.J."/>
            <person name="Huegler M."/>
            <person name="Kerfeld C.A."/>
            <person name="Klotz M.G."/>
            <person name="Kong W.W."/>
            <person name="Land M."/>
            <person name="Lapidus A."/>
            <person name="Larimer F.W."/>
            <person name="Longo D.L."/>
            <person name="Lucas S."/>
            <person name="Malfatti S.A."/>
            <person name="Massey S.E."/>
            <person name="Martin D.D."/>
            <person name="McCuddin Z."/>
            <person name="Meyer F."/>
            <person name="Moore J.L."/>
            <person name="Ocampo L.H. Jr."/>
            <person name="Paul J.H."/>
            <person name="Paulsen I.T."/>
            <person name="Reep D.K."/>
            <person name="Ren Q."/>
            <person name="Ross R.L."/>
            <person name="Sato P.Y."/>
            <person name="Thomas P."/>
            <person name="Tinkham L.E."/>
            <person name="Zeruth G.T."/>
        </authorList>
    </citation>
    <scope>NUCLEOTIDE SEQUENCE [LARGE SCALE GENOMIC DNA]</scope>
    <source>
        <strain>DSM 25203 / XCL-2</strain>
    </source>
</reference>
<evidence type="ECO:0000255" key="1">
    <source>
        <dbReference type="HAMAP-Rule" id="MF_01368"/>
    </source>
</evidence>
<evidence type="ECO:0000305" key="2"/>
<dbReference type="EMBL" id="CP000109">
    <property type="protein sequence ID" value="ABB40916.1"/>
    <property type="molecule type" value="Genomic_DNA"/>
</dbReference>
<dbReference type="SMR" id="Q31IV7"/>
<dbReference type="STRING" id="317025.Tcr_0320"/>
<dbReference type="KEGG" id="tcx:Tcr_0320"/>
<dbReference type="eggNOG" id="COG0203">
    <property type="taxonomic scope" value="Bacteria"/>
</dbReference>
<dbReference type="HOGENOM" id="CLU_074407_2_2_6"/>
<dbReference type="OrthoDB" id="9809073at2"/>
<dbReference type="GO" id="GO:0022625">
    <property type="term" value="C:cytosolic large ribosomal subunit"/>
    <property type="evidence" value="ECO:0007669"/>
    <property type="project" value="TreeGrafter"/>
</dbReference>
<dbReference type="GO" id="GO:0003735">
    <property type="term" value="F:structural constituent of ribosome"/>
    <property type="evidence" value="ECO:0007669"/>
    <property type="project" value="InterPro"/>
</dbReference>
<dbReference type="GO" id="GO:0006412">
    <property type="term" value="P:translation"/>
    <property type="evidence" value="ECO:0007669"/>
    <property type="project" value="UniProtKB-UniRule"/>
</dbReference>
<dbReference type="FunFam" id="3.90.1030.10:FF:000001">
    <property type="entry name" value="50S ribosomal protein L17"/>
    <property type="match status" value="1"/>
</dbReference>
<dbReference type="Gene3D" id="3.90.1030.10">
    <property type="entry name" value="Ribosomal protein L17"/>
    <property type="match status" value="1"/>
</dbReference>
<dbReference type="HAMAP" id="MF_01368">
    <property type="entry name" value="Ribosomal_bL17"/>
    <property type="match status" value="1"/>
</dbReference>
<dbReference type="InterPro" id="IPR000456">
    <property type="entry name" value="Ribosomal_bL17"/>
</dbReference>
<dbReference type="InterPro" id="IPR047859">
    <property type="entry name" value="Ribosomal_bL17_CS"/>
</dbReference>
<dbReference type="InterPro" id="IPR036373">
    <property type="entry name" value="Ribosomal_bL17_sf"/>
</dbReference>
<dbReference type="NCBIfam" id="TIGR00059">
    <property type="entry name" value="L17"/>
    <property type="match status" value="1"/>
</dbReference>
<dbReference type="PANTHER" id="PTHR14413:SF16">
    <property type="entry name" value="LARGE RIBOSOMAL SUBUNIT PROTEIN BL17M"/>
    <property type="match status" value="1"/>
</dbReference>
<dbReference type="PANTHER" id="PTHR14413">
    <property type="entry name" value="RIBOSOMAL PROTEIN L17"/>
    <property type="match status" value="1"/>
</dbReference>
<dbReference type="Pfam" id="PF01196">
    <property type="entry name" value="Ribosomal_L17"/>
    <property type="match status" value="1"/>
</dbReference>
<dbReference type="SUPFAM" id="SSF64263">
    <property type="entry name" value="Prokaryotic ribosomal protein L17"/>
    <property type="match status" value="1"/>
</dbReference>
<dbReference type="PROSITE" id="PS01167">
    <property type="entry name" value="RIBOSOMAL_L17"/>
    <property type="match status" value="1"/>
</dbReference>
<name>RL17_HYDCU</name>
<protein>
    <recommendedName>
        <fullName evidence="1">Large ribosomal subunit protein bL17</fullName>
    </recommendedName>
    <alternativeName>
        <fullName evidence="2">50S ribosomal protein L17</fullName>
    </alternativeName>
</protein>
<gene>
    <name evidence="1" type="primary">rplQ</name>
    <name type="ordered locus">Tcr_0320</name>
</gene>
<organism>
    <name type="scientific">Hydrogenovibrio crunogenus (strain DSM 25203 / XCL-2)</name>
    <name type="common">Thiomicrospira crunogena</name>
    <dbReference type="NCBI Taxonomy" id="317025"/>
    <lineage>
        <taxon>Bacteria</taxon>
        <taxon>Pseudomonadati</taxon>
        <taxon>Pseudomonadota</taxon>
        <taxon>Gammaproteobacteria</taxon>
        <taxon>Thiotrichales</taxon>
        <taxon>Piscirickettsiaceae</taxon>
        <taxon>Hydrogenovibrio</taxon>
    </lineage>
</organism>